<reference key="1">
    <citation type="journal article" date="1997" name="Mol. Microbiol.">
        <title>The role of ribosomal RNAs in macrolide resistance.</title>
        <authorList>
            <person name="Sander P."/>
            <person name="Prammananan T."/>
            <person name="Meier A."/>
            <person name="Frischkorn K."/>
            <person name="Boettger E.C."/>
        </authorList>
    </citation>
    <scope>NUCLEOTIDE SEQUENCE [GENOMIC DNA]</scope>
    <source>
        <strain>BCG</strain>
    </source>
</reference>
<reference key="2">
    <citation type="journal article" date="2003" name="Proc. Natl. Acad. Sci. U.S.A.">
        <title>The complete genome sequence of Mycobacterium bovis.</title>
        <authorList>
            <person name="Garnier T."/>
            <person name="Eiglmeier K."/>
            <person name="Camus J.-C."/>
            <person name="Medina N."/>
            <person name="Mansoor H."/>
            <person name="Pryor M."/>
            <person name="Duthoy S."/>
            <person name="Grondin S."/>
            <person name="Lacroix C."/>
            <person name="Monsempe C."/>
            <person name="Simon S."/>
            <person name="Harris B."/>
            <person name="Atkin R."/>
            <person name="Doggett J."/>
            <person name="Mayes R."/>
            <person name="Keating L."/>
            <person name="Wheeler P.R."/>
            <person name="Parkhill J."/>
            <person name="Barrell B.G."/>
            <person name="Cole S.T."/>
            <person name="Gordon S.V."/>
            <person name="Hewinson R.G."/>
        </authorList>
    </citation>
    <scope>NUCLEOTIDE SEQUENCE [LARGE SCALE GENOMIC DNA]</scope>
    <source>
        <strain>ATCC BAA-935 / AF2122/97</strain>
    </source>
</reference>
<reference key="3">
    <citation type="journal article" date="2017" name="Genome Announc.">
        <title>Updated reference genome sequence and annotation of Mycobacterium bovis AF2122/97.</title>
        <authorList>
            <person name="Malone K.M."/>
            <person name="Farrell D."/>
            <person name="Stuber T.P."/>
            <person name="Schubert O.T."/>
            <person name="Aebersold R."/>
            <person name="Robbe-Austerman S."/>
            <person name="Gordon S.V."/>
        </authorList>
    </citation>
    <scope>NUCLEOTIDE SEQUENCE [LARGE SCALE GENOMIC DNA]</scope>
    <scope>GENOME REANNOTATION</scope>
    <source>
        <strain>ATCC BAA-935 / AF2122/97</strain>
    </source>
</reference>
<evidence type="ECO:0000255" key="1">
    <source>
        <dbReference type="HAMAP-Rule" id="MF_01342"/>
    </source>
</evidence>
<evidence type="ECO:0000256" key="2">
    <source>
        <dbReference type="SAM" id="MobiDB-lite"/>
    </source>
</evidence>
<evidence type="ECO:0000305" key="3"/>
<gene>
    <name evidence="1" type="primary">rplP</name>
    <name type="ordered locus">BQ2027_MB0728</name>
</gene>
<organism>
    <name type="scientific">Mycobacterium bovis (strain ATCC BAA-935 / AF2122/97)</name>
    <dbReference type="NCBI Taxonomy" id="233413"/>
    <lineage>
        <taxon>Bacteria</taxon>
        <taxon>Bacillati</taxon>
        <taxon>Actinomycetota</taxon>
        <taxon>Actinomycetes</taxon>
        <taxon>Mycobacteriales</taxon>
        <taxon>Mycobacteriaceae</taxon>
        <taxon>Mycobacterium</taxon>
        <taxon>Mycobacterium tuberculosis complex</taxon>
    </lineage>
</organism>
<comment type="function">
    <text evidence="1">Binds 23S rRNA and is also seen to make contacts with the A and possibly P site tRNAs.</text>
</comment>
<comment type="subunit">
    <text evidence="1">Part of the 50S ribosomal subunit.</text>
</comment>
<comment type="similarity">
    <text evidence="1">Belongs to the universal ribosomal protein uL16 family.</text>
</comment>
<accession>O06049</accession>
<accession>A0A1R3XW84</accession>
<accession>X2BFR0</accession>
<feature type="chain" id="PRO_0000062135" description="Large ribosomal subunit protein uL16">
    <location>
        <begin position="1"/>
        <end position="138"/>
    </location>
</feature>
<feature type="region of interest" description="Disordered" evidence="2">
    <location>
        <begin position="1"/>
        <end position="22"/>
    </location>
</feature>
<feature type="compositionally biased region" description="Basic residues" evidence="2">
    <location>
        <begin position="1"/>
        <end position="17"/>
    </location>
</feature>
<feature type="sequence conflict" description="In Ref. 1; CAA73679." evidence="3" ref="1">
    <original>K</original>
    <variation>E</variation>
    <location>
        <position position="63"/>
    </location>
</feature>
<feature type="sequence conflict" description="In Ref. 1; CAA73679." evidence="3" ref="1">
    <original>D</original>
    <variation>G</variation>
    <location>
        <position position="71"/>
    </location>
</feature>
<proteinExistence type="inferred from homology"/>
<protein>
    <recommendedName>
        <fullName evidence="1">Large ribosomal subunit protein uL16</fullName>
    </recommendedName>
    <alternativeName>
        <fullName evidence="3">50S ribosomal protein L16</fullName>
    </alternativeName>
</protein>
<sequence>MLIPRKVKHRKQHHPRQRGIASGGTTVNFGDYGIQALEHAYVTNRQIESARIAINRHIKRGGKVWINIFPDRPLTKKPAETRMGSGKGSPEWWVANVKPGRVLFELSYPNEGVARAALTRAIHKLPIKARIITREEQF</sequence>
<dbReference type="EMBL" id="Y13228">
    <property type="protein sequence ID" value="CAA73679.1"/>
    <property type="molecule type" value="Genomic_DNA"/>
</dbReference>
<dbReference type="EMBL" id="LT708304">
    <property type="protein sequence ID" value="SIT99327.1"/>
    <property type="molecule type" value="Genomic_DNA"/>
</dbReference>
<dbReference type="RefSeq" id="NP_854386.1">
    <property type="nucleotide sequence ID" value="NC_002945.3"/>
</dbReference>
<dbReference type="RefSeq" id="WP_003403592.1">
    <property type="nucleotide sequence ID" value="NC_002945.4"/>
</dbReference>
<dbReference type="SMR" id="O06049"/>
<dbReference type="KEGG" id="mbo:BQ2027_MB0728"/>
<dbReference type="PATRIC" id="fig|233413.5.peg.794"/>
<dbReference type="Proteomes" id="UP000001419">
    <property type="component" value="Chromosome"/>
</dbReference>
<dbReference type="GO" id="GO:0022625">
    <property type="term" value="C:cytosolic large ribosomal subunit"/>
    <property type="evidence" value="ECO:0007669"/>
    <property type="project" value="TreeGrafter"/>
</dbReference>
<dbReference type="GO" id="GO:0019843">
    <property type="term" value="F:rRNA binding"/>
    <property type="evidence" value="ECO:0007669"/>
    <property type="project" value="UniProtKB-UniRule"/>
</dbReference>
<dbReference type="GO" id="GO:0003735">
    <property type="term" value="F:structural constituent of ribosome"/>
    <property type="evidence" value="ECO:0007669"/>
    <property type="project" value="InterPro"/>
</dbReference>
<dbReference type="GO" id="GO:0000049">
    <property type="term" value="F:tRNA binding"/>
    <property type="evidence" value="ECO:0007669"/>
    <property type="project" value="UniProtKB-KW"/>
</dbReference>
<dbReference type="GO" id="GO:0006412">
    <property type="term" value="P:translation"/>
    <property type="evidence" value="ECO:0007669"/>
    <property type="project" value="UniProtKB-UniRule"/>
</dbReference>
<dbReference type="CDD" id="cd01433">
    <property type="entry name" value="Ribosomal_L16_L10e"/>
    <property type="match status" value="1"/>
</dbReference>
<dbReference type="FunFam" id="3.90.1170.10:FF:000001">
    <property type="entry name" value="50S ribosomal protein L16"/>
    <property type="match status" value="1"/>
</dbReference>
<dbReference type="Gene3D" id="3.90.1170.10">
    <property type="entry name" value="Ribosomal protein L10e/L16"/>
    <property type="match status" value="1"/>
</dbReference>
<dbReference type="HAMAP" id="MF_01342">
    <property type="entry name" value="Ribosomal_uL16"/>
    <property type="match status" value="1"/>
</dbReference>
<dbReference type="InterPro" id="IPR047873">
    <property type="entry name" value="Ribosomal_uL16"/>
</dbReference>
<dbReference type="InterPro" id="IPR000114">
    <property type="entry name" value="Ribosomal_uL16_bact-type"/>
</dbReference>
<dbReference type="InterPro" id="IPR020798">
    <property type="entry name" value="Ribosomal_uL16_CS"/>
</dbReference>
<dbReference type="InterPro" id="IPR016180">
    <property type="entry name" value="Ribosomal_uL16_dom"/>
</dbReference>
<dbReference type="InterPro" id="IPR036920">
    <property type="entry name" value="Ribosomal_uL16_sf"/>
</dbReference>
<dbReference type="NCBIfam" id="TIGR01164">
    <property type="entry name" value="rplP_bact"/>
    <property type="match status" value="1"/>
</dbReference>
<dbReference type="PANTHER" id="PTHR12220">
    <property type="entry name" value="50S/60S RIBOSOMAL PROTEIN L16"/>
    <property type="match status" value="1"/>
</dbReference>
<dbReference type="PANTHER" id="PTHR12220:SF13">
    <property type="entry name" value="LARGE RIBOSOMAL SUBUNIT PROTEIN UL16M"/>
    <property type="match status" value="1"/>
</dbReference>
<dbReference type="Pfam" id="PF00252">
    <property type="entry name" value="Ribosomal_L16"/>
    <property type="match status" value="1"/>
</dbReference>
<dbReference type="PRINTS" id="PR00060">
    <property type="entry name" value="RIBOSOMALL16"/>
</dbReference>
<dbReference type="SUPFAM" id="SSF54686">
    <property type="entry name" value="Ribosomal protein L16p/L10e"/>
    <property type="match status" value="1"/>
</dbReference>
<dbReference type="PROSITE" id="PS00586">
    <property type="entry name" value="RIBOSOMAL_L16_1"/>
    <property type="match status" value="1"/>
</dbReference>
<dbReference type="PROSITE" id="PS00701">
    <property type="entry name" value="RIBOSOMAL_L16_2"/>
    <property type="match status" value="1"/>
</dbReference>
<keyword id="KW-1185">Reference proteome</keyword>
<keyword id="KW-0687">Ribonucleoprotein</keyword>
<keyword id="KW-0689">Ribosomal protein</keyword>
<keyword id="KW-0694">RNA-binding</keyword>
<keyword id="KW-0699">rRNA-binding</keyword>
<keyword id="KW-0820">tRNA-binding</keyword>
<name>RL16_MYCBO</name>